<organism>
    <name type="scientific">Crocodylus porosus</name>
    <name type="common">Saltwater crocodile</name>
    <name type="synonym">Estuarine crocodile</name>
    <dbReference type="NCBI Taxonomy" id="8502"/>
    <lineage>
        <taxon>Eukaryota</taxon>
        <taxon>Metazoa</taxon>
        <taxon>Chordata</taxon>
        <taxon>Craniata</taxon>
        <taxon>Vertebrata</taxon>
        <taxon>Euteleostomi</taxon>
        <taxon>Archelosauria</taxon>
        <taxon>Archosauria</taxon>
        <taxon>Crocodylia</taxon>
        <taxon>Longirostres</taxon>
        <taxon>Crocodylidae</taxon>
        <taxon>Crocodylus</taxon>
    </lineage>
</organism>
<comment type="function">
    <text evidence="2">Thyroid hormone-binding protein, with a much higher binding affinity for triiodothyronine (T3) than for thyroxine (T4). Probably transports triiodothyronine from the bloodstream to the brain.</text>
</comment>
<comment type="subunit">
    <text evidence="2">Homotetramer. Dimer of dimers. In the homotetramer, subunits assemble around a central channel that can accommodate two ligand molecules. Interacts with RBP4.</text>
</comment>
<comment type="interaction">
    <interactant intactId="EBI-7038226">
        <id>O55245</id>
    </interactant>
    <interactant intactId="EBI-2116134">
        <id>P02753</id>
        <label>RBP4</label>
    </interactant>
    <organismsDiffer>true</organismsDiffer>
    <experiments>2</experiments>
</comment>
<comment type="subcellular location">
    <subcellularLocation>
        <location evidence="2">Secreted</location>
    </subcellularLocation>
</comment>
<comment type="tissue specificity">
    <text evidence="2">Strongly expressed in the brain, and to a lesser extent in the eye.</text>
</comment>
<comment type="domain">
    <text evidence="2">The N-terminus strongly influences thyroid hormone-binding properties.</text>
</comment>
<comment type="PTM">
    <text evidence="1">Sulfonation of the reactive cysteine Cys-33 enhances the stability of the native conformation of TTR, avoiding misassembly of the protein leading to amyloid formation.</text>
</comment>
<comment type="similarity">
    <text evidence="3">Belongs to the transthyretin family.</text>
</comment>
<name>TTHY_CROPO</name>
<feature type="signal peptide" evidence="2">
    <location>
        <begin position="1"/>
        <end position="20"/>
    </location>
</feature>
<feature type="chain" id="PRO_0000035769" description="Transthyretin">
    <location>
        <begin position="21"/>
        <end position="150"/>
    </location>
</feature>
<feature type="binding site" evidence="1">
    <location>
        <position position="38"/>
    </location>
    <ligand>
        <name>L-thyroxine</name>
        <dbReference type="ChEBI" id="CHEBI:58448"/>
    </ligand>
</feature>
<feature type="binding site" evidence="1">
    <location>
        <position position="77"/>
    </location>
    <ligand>
        <name>L-thyroxine</name>
        <dbReference type="ChEBI" id="CHEBI:58448"/>
    </ligand>
</feature>
<feature type="binding site" evidence="1">
    <location>
        <position position="140"/>
    </location>
    <ligand>
        <name>L-thyroxine</name>
        <dbReference type="ChEBI" id="CHEBI:58448"/>
    </ligand>
</feature>
<feature type="modified residue" description="Sulfocysteine" evidence="1">
    <location>
        <position position="33"/>
    </location>
</feature>
<accession>O55245</accession>
<sequence>MAFHSMLLVFLAGLVFLTEAAPLVSHGSIDSKCPLMVKVLDAVRGSPAANVAIKVFKKTSDGDWQEFAAGKTTEFGEVHELTSDEKFVEGIYRVEFDTSSYWKALGLSPFHEYADVVFTANDSGHRHYTIAALLSPFSYSTTAVVSDPQE</sequence>
<keyword id="KW-0903">Direct protein sequencing</keyword>
<keyword id="KW-0372">Hormone</keyword>
<keyword id="KW-1185">Reference proteome</keyword>
<keyword id="KW-0964">Secreted</keyword>
<keyword id="KW-0732">Signal</keyword>
<keyword id="KW-0765">Sulfation</keyword>
<keyword id="KW-0795">Thyroid hormone</keyword>
<keyword id="KW-0813">Transport</keyword>
<gene>
    <name type="primary">TTR</name>
</gene>
<evidence type="ECO:0000250" key="1">
    <source>
        <dbReference type="UniProtKB" id="P02766"/>
    </source>
</evidence>
<evidence type="ECO:0000269" key="2">
    <source>
    </source>
</evidence>
<evidence type="ECO:0000305" key="3"/>
<protein>
    <recommendedName>
        <fullName>Transthyretin</fullName>
        <shortName>crocTTR</shortName>
    </recommendedName>
    <alternativeName>
        <fullName>Prealbumin</fullName>
    </alternativeName>
</protein>
<reference key="1">
    <citation type="journal article" date="2002" name="Am. J. Physiol.">
        <title>Crocodile transthyretin: structure, function, and evolution.</title>
        <authorList>
            <person name="Prapunpoj P."/>
            <person name="Richardson S.J."/>
            <person name="Schreiber G."/>
        </authorList>
    </citation>
    <scope>NUCLEOTIDE SEQUENCE [MRNA]</scope>
    <scope>PROTEIN SEQUENCE OF 21-28</scope>
    <scope>FUNCTION</scope>
    <scope>SUBUNIT</scope>
    <scope>INTERACTION WITH RBP4</scope>
    <scope>SUBCELLULAR LOCATION</scope>
    <scope>DOMAIN</scope>
    <scope>TISSUE SPECIFICITY</scope>
    <scope>IDENTIFICATION BY MASS SPECTROMETRY</scope>
    <source>
        <tissue>Brain</tissue>
    </source>
</reference>
<dbReference type="EMBL" id="AJ223148">
    <property type="protein sequence ID" value="CAA11129.1"/>
    <property type="molecule type" value="mRNA"/>
</dbReference>
<dbReference type="RefSeq" id="XP_019402943.1">
    <property type="nucleotide sequence ID" value="XM_019547398.1"/>
</dbReference>
<dbReference type="SMR" id="O55245"/>
<dbReference type="IntAct" id="O55245">
    <property type="interactions" value="1"/>
</dbReference>
<dbReference type="MINT" id="O55245"/>
<dbReference type="Ensembl" id="ENSCPRT00005025389.1">
    <property type="protein sequence ID" value="ENSCPRP00005021736.1"/>
    <property type="gene ID" value="ENSCPRG00005015105.1"/>
</dbReference>
<dbReference type="GeneID" id="109318267"/>
<dbReference type="KEGG" id="cpoo:109318267"/>
<dbReference type="CTD" id="7276"/>
<dbReference type="GeneTree" id="ENSGT00940000153229"/>
<dbReference type="OMA" id="AMYKVEL"/>
<dbReference type="OrthoDB" id="10265230at2759"/>
<dbReference type="Proteomes" id="UP000594220">
    <property type="component" value="Unplaced"/>
</dbReference>
<dbReference type="GO" id="GO:0005576">
    <property type="term" value="C:extracellular region"/>
    <property type="evidence" value="ECO:0000314"/>
    <property type="project" value="UniProtKB"/>
</dbReference>
<dbReference type="GO" id="GO:0005615">
    <property type="term" value="C:extracellular space"/>
    <property type="evidence" value="ECO:0007669"/>
    <property type="project" value="TreeGrafter"/>
</dbReference>
<dbReference type="GO" id="GO:0005179">
    <property type="term" value="F:hormone activity"/>
    <property type="evidence" value="ECO:0007669"/>
    <property type="project" value="UniProtKB-KW"/>
</dbReference>
<dbReference type="GO" id="GO:0042802">
    <property type="term" value="F:identical protein binding"/>
    <property type="evidence" value="ECO:0000353"/>
    <property type="project" value="UniProtKB"/>
</dbReference>
<dbReference type="GO" id="GO:0140313">
    <property type="term" value="F:molecular sequestering activity"/>
    <property type="evidence" value="ECO:0007669"/>
    <property type="project" value="Ensembl"/>
</dbReference>
<dbReference type="GO" id="GO:0070324">
    <property type="term" value="F:thyroid hormone binding"/>
    <property type="evidence" value="ECO:0000314"/>
    <property type="project" value="UniProtKB"/>
</dbReference>
<dbReference type="GO" id="GO:0003105">
    <property type="term" value="P:negative regulation of glomerular filtration"/>
    <property type="evidence" value="ECO:0007669"/>
    <property type="project" value="Ensembl"/>
</dbReference>
<dbReference type="GO" id="GO:0007603">
    <property type="term" value="P:phototransduction, visible light"/>
    <property type="evidence" value="ECO:0007669"/>
    <property type="project" value="Ensembl"/>
</dbReference>
<dbReference type="GO" id="GO:0006144">
    <property type="term" value="P:purine nucleobase metabolic process"/>
    <property type="evidence" value="ECO:0007669"/>
    <property type="project" value="TreeGrafter"/>
</dbReference>
<dbReference type="GO" id="GO:0001523">
    <property type="term" value="P:retinoid metabolic process"/>
    <property type="evidence" value="ECO:0007669"/>
    <property type="project" value="Ensembl"/>
</dbReference>
<dbReference type="GO" id="GO:0070327">
    <property type="term" value="P:thyroid hormone transport"/>
    <property type="evidence" value="ECO:0000305"/>
    <property type="project" value="UniProtKB"/>
</dbReference>
<dbReference type="CDD" id="cd05821">
    <property type="entry name" value="TLP_Transthyretin"/>
    <property type="match status" value="1"/>
</dbReference>
<dbReference type="FunFam" id="2.60.40.180:FF:000002">
    <property type="entry name" value="Transthyretin"/>
    <property type="match status" value="1"/>
</dbReference>
<dbReference type="Gene3D" id="2.60.40.180">
    <property type="entry name" value="Transthyretin/hydroxyisourate hydrolase domain"/>
    <property type="match status" value="1"/>
</dbReference>
<dbReference type="InterPro" id="IPR023418">
    <property type="entry name" value="Thyroxine_BS"/>
</dbReference>
<dbReference type="InterPro" id="IPR000895">
    <property type="entry name" value="Transthyretin/HIU_hydrolase"/>
</dbReference>
<dbReference type="InterPro" id="IPR023416">
    <property type="entry name" value="Transthyretin/HIU_hydrolase_d"/>
</dbReference>
<dbReference type="InterPro" id="IPR036817">
    <property type="entry name" value="Transthyretin/HIU_hydrolase_sf"/>
</dbReference>
<dbReference type="InterPro" id="IPR023419">
    <property type="entry name" value="Transthyretin_CS"/>
</dbReference>
<dbReference type="PANTHER" id="PTHR10395:SF12">
    <property type="entry name" value="TRANSTHYRETIN"/>
    <property type="match status" value="1"/>
</dbReference>
<dbReference type="PANTHER" id="PTHR10395">
    <property type="entry name" value="URICASE AND TRANSTHYRETIN-RELATED"/>
    <property type="match status" value="1"/>
</dbReference>
<dbReference type="Pfam" id="PF00576">
    <property type="entry name" value="Transthyretin"/>
    <property type="match status" value="1"/>
</dbReference>
<dbReference type="PRINTS" id="PR00189">
    <property type="entry name" value="TRNSTHYRETIN"/>
</dbReference>
<dbReference type="SMART" id="SM00095">
    <property type="entry name" value="TR_THY"/>
    <property type="match status" value="1"/>
</dbReference>
<dbReference type="SUPFAM" id="SSF49472">
    <property type="entry name" value="Transthyretin (synonym: prealbumin)"/>
    <property type="match status" value="1"/>
</dbReference>
<dbReference type="PROSITE" id="PS00768">
    <property type="entry name" value="TRANSTHYRETIN_1"/>
    <property type="match status" value="1"/>
</dbReference>
<dbReference type="PROSITE" id="PS00769">
    <property type="entry name" value="TRANSTHYRETIN_2"/>
    <property type="match status" value="1"/>
</dbReference>
<proteinExistence type="evidence at protein level"/>